<keyword id="KW-0472">Membrane</keyword>
<keyword id="KW-1185">Reference proteome</keyword>
<keyword id="KW-0812">Transmembrane</keyword>
<keyword id="KW-1133">Transmembrane helix</keyword>
<gene>
    <name type="ORF">SPAC57A7.05</name>
</gene>
<feature type="chain" id="PRO_0000116640" description="Uncharacterized protein C57A7.05">
    <location>
        <begin position="1"/>
        <end position="1337"/>
    </location>
</feature>
<feature type="transmembrane region" description="Helical" evidence="1">
    <location>
        <begin position="209"/>
        <end position="229"/>
    </location>
</feature>
<feature type="transmembrane region" description="Helical" evidence="1">
    <location>
        <begin position="241"/>
        <end position="261"/>
    </location>
</feature>
<feature type="transmembrane region" description="Helical" evidence="1">
    <location>
        <begin position="267"/>
        <end position="287"/>
    </location>
</feature>
<feature type="transmembrane region" description="Helical" evidence="1">
    <location>
        <begin position="328"/>
        <end position="348"/>
    </location>
</feature>
<feature type="transmembrane region" description="Helical" evidence="1">
    <location>
        <begin position="361"/>
        <end position="381"/>
    </location>
</feature>
<feature type="transmembrane region" description="Helical" evidence="1">
    <location>
        <begin position="387"/>
        <end position="407"/>
    </location>
</feature>
<feature type="transmembrane region" description="Helical" evidence="1">
    <location>
        <begin position="917"/>
        <end position="937"/>
    </location>
</feature>
<feature type="transmembrane region" description="Helical" evidence="1">
    <location>
        <begin position="975"/>
        <end position="995"/>
    </location>
</feature>
<feature type="transmembrane region" description="Helical" evidence="1">
    <location>
        <begin position="997"/>
        <end position="1017"/>
    </location>
</feature>
<feature type="transmembrane region" description="Helical" evidence="1">
    <location>
        <begin position="1021"/>
        <end position="1041"/>
    </location>
</feature>
<feature type="transmembrane region" description="Helical" evidence="1">
    <location>
        <begin position="1066"/>
        <end position="1086"/>
    </location>
</feature>
<feature type="transmembrane region" description="Helical" evidence="1">
    <location>
        <begin position="1275"/>
        <end position="1295"/>
    </location>
</feature>
<feature type="region of interest" description="Disordered" evidence="2">
    <location>
        <begin position="1"/>
        <end position="94"/>
    </location>
</feature>
<feature type="region of interest" description="Disordered" evidence="2">
    <location>
        <begin position="119"/>
        <end position="174"/>
    </location>
</feature>
<feature type="region of interest" description="Disordered" evidence="2">
    <location>
        <begin position="623"/>
        <end position="662"/>
    </location>
</feature>
<feature type="region of interest" description="Disordered" evidence="2">
    <location>
        <begin position="868"/>
        <end position="894"/>
    </location>
</feature>
<feature type="compositionally biased region" description="Low complexity" evidence="2">
    <location>
        <begin position="18"/>
        <end position="37"/>
    </location>
</feature>
<feature type="compositionally biased region" description="Low complexity" evidence="2">
    <location>
        <begin position="68"/>
        <end position="79"/>
    </location>
</feature>
<feature type="compositionally biased region" description="Polar residues" evidence="2">
    <location>
        <begin position="80"/>
        <end position="94"/>
    </location>
</feature>
<feature type="compositionally biased region" description="Low complexity" evidence="2">
    <location>
        <begin position="123"/>
        <end position="147"/>
    </location>
</feature>
<feature type="compositionally biased region" description="Basic and acidic residues" evidence="2">
    <location>
        <begin position="157"/>
        <end position="167"/>
    </location>
</feature>
<feature type="compositionally biased region" description="Polar residues" evidence="2">
    <location>
        <begin position="626"/>
        <end position="644"/>
    </location>
</feature>
<feature type="compositionally biased region" description="Basic and acidic residues" evidence="2">
    <location>
        <begin position="868"/>
        <end position="880"/>
    </location>
</feature>
<evidence type="ECO:0000255" key="1"/>
<evidence type="ECO:0000256" key="2">
    <source>
        <dbReference type="SAM" id="MobiDB-lite"/>
    </source>
</evidence>
<evidence type="ECO:0000305" key="3"/>
<sequence>MPTSGAPSNLDRANAQLSNTSSTESSSSNNSSTASGSRHVKIESNRVSLPPLKIQKGSFPAIRQPTESSTHFQSSHSVSNAHNQSPLNQSQSSANPVTFEIADEPSPSFNHSFFEKDNARDIPQQPSHSQNPSSSSSSSSSQSSQHSTHLQFQIPSNEKKSLDDPSPRRKPSFFSKSNLKRKYRYLKNPDAWNLPPSLQFIPKNLNRKGLKPVIRAAINSWIAFLLVLARHTNRVLGMSSFFVVITSILVPAMEPIAPMLWKTLFQFLLLFSAYAWTVLAAKLATVARGSPSREASLAQAVSEGFVCPDPSQGFNYCIREAVFQGYFVRPLPSIIWALFEFSAVALFIRLKMKYPPLNFPCVFSIICTAVSANMGPMYPYFYPRIGLFFIVPNCVQTGITIGCTLFILPETCNHAYNTMLCKLTEDTSSFLKRQTEMLSHSPASSHWASFSSLENEIANLKNLLSKMKSTELFLDMEFSYGRLKGEDLVSIQRIFKKTILRLSAFSYFQRLIDHNMQIYDDETIQKAGEATVSSWLNTPALSAASARTSSGRNSSESDRVSYFGLAPVNATTQDSERNGEEIRRLASKQLNVPVNNNFRTVGYASPSNASTASFNDIVQRGRSHVRTGSNNSEAPLAAKTSTTKRNGDLLEPQSPSLRSHKSRLHLPSSLGKFYKKRKKSYKPVGVLEAQQYLALESRLPFNKPQFLDSLLSILKNSSGDLFDQAIYSLDALNAWLVELNHDRIKKIFSKRDQKAAGRDRLKLIKLHYDHLSQALHEYEREKCFDVRKPYESLFQNQDVQQFYMHSLRSLFVVYYYESHLMQAVRGILQILETVIDLEERRPIRRLWWPLRSIRRSLLSQLTGHQGDYDENIHNDVDKDMNQSSTQPRDPDADHPSSLYHICGYRLTKFFKSIFRPMNVFVLKVGTLAVICTIPAFCRSSAGWYYRNRGLWAVILAIMSLQRFTADTVYGYLMRIFGTFFGAILGMVIWYTGSGHGLGNAYGLAAVWGAAIPFIQFIRVHFVILTPMPAVIFCVTAALTVTYSWKSNHEPGVVTLGIGWDVAYRRFLTVAAGITVAFIFSFLPQPRTAKYAVRKNIGNTLIDIGSIHCEISNFARRPVHNHIDPDIQSKVLNLSNTIQSLIGRLNMVNFEPSFKGRWPMEKYQLLCKTQLELVDLLNSLMTTITTLEDRWLFALLYRVGWLDHKFVADQLAVLYMSSNALQTGNPLPQVVPSPLVDRFFTTSGDVFLPPGLNDAPVPIPKAMEYELLNNMQYLNFAVGCTIAYAVVNHIDRIMFITKSLCGEIFEIDKWPFHFDDEYLYTCHPTNSPDQRKSPHDLV</sequence>
<reference key="1">
    <citation type="journal article" date="2002" name="Nature">
        <title>The genome sequence of Schizosaccharomyces pombe.</title>
        <authorList>
            <person name="Wood V."/>
            <person name="Gwilliam R."/>
            <person name="Rajandream M.A."/>
            <person name="Lyne M.H."/>
            <person name="Lyne R."/>
            <person name="Stewart A."/>
            <person name="Sgouros J.G."/>
            <person name="Peat N."/>
            <person name="Hayles J."/>
            <person name="Baker S.G."/>
            <person name="Basham D."/>
            <person name="Bowman S."/>
            <person name="Brooks K."/>
            <person name="Brown D."/>
            <person name="Brown S."/>
            <person name="Chillingworth T."/>
            <person name="Churcher C.M."/>
            <person name="Collins M."/>
            <person name="Connor R."/>
            <person name="Cronin A."/>
            <person name="Davis P."/>
            <person name="Feltwell T."/>
            <person name="Fraser A."/>
            <person name="Gentles S."/>
            <person name="Goble A."/>
            <person name="Hamlin N."/>
            <person name="Harris D.E."/>
            <person name="Hidalgo J."/>
            <person name="Hodgson G."/>
            <person name="Holroyd S."/>
            <person name="Hornsby T."/>
            <person name="Howarth S."/>
            <person name="Huckle E.J."/>
            <person name="Hunt S."/>
            <person name="Jagels K."/>
            <person name="James K.D."/>
            <person name="Jones L."/>
            <person name="Jones M."/>
            <person name="Leather S."/>
            <person name="McDonald S."/>
            <person name="McLean J."/>
            <person name="Mooney P."/>
            <person name="Moule S."/>
            <person name="Mungall K.L."/>
            <person name="Murphy L.D."/>
            <person name="Niblett D."/>
            <person name="Odell C."/>
            <person name="Oliver K."/>
            <person name="O'Neil S."/>
            <person name="Pearson D."/>
            <person name="Quail M.A."/>
            <person name="Rabbinowitsch E."/>
            <person name="Rutherford K.M."/>
            <person name="Rutter S."/>
            <person name="Saunders D."/>
            <person name="Seeger K."/>
            <person name="Sharp S."/>
            <person name="Skelton J."/>
            <person name="Simmonds M.N."/>
            <person name="Squares R."/>
            <person name="Squares S."/>
            <person name="Stevens K."/>
            <person name="Taylor K."/>
            <person name="Taylor R.G."/>
            <person name="Tivey A."/>
            <person name="Walsh S.V."/>
            <person name="Warren T."/>
            <person name="Whitehead S."/>
            <person name="Woodward J.R."/>
            <person name="Volckaert G."/>
            <person name="Aert R."/>
            <person name="Robben J."/>
            <person name="Grymonprez B."/>
            <person name="Weltjens I."/>
            <person name="Vanstreels E."/>
            <person name="Rieger M."/>
            <person name="Schaefer M."/>
            <person name="Mueller-Auer S."/>
            <person name="Gabel C."/>
            <person name="Fuchs M."/>
            <person name="Duesterhoeft A."/>
            <person name="Fritzc C."/>
            <person name="Holzer E."/>
            <person name="Moestl D."/>
            <person name="Hilbert H."/>
            <person name="Borzym K."/>
            <person name="Langer I."/>
            <person name="Beck A."/>
            <person name="Lehrach H."/>
            <person name="Reinhardt R."/>
            <person name="Pohl T.M."/>
            <person name="Eger P."/>
            <person name="Zimmermann W."/>
            <person name="Wedler H."/>
            <person name="Wambutt R."/>
            <person name="Purnelle B."/>
            <person name="Goffeau A."/>
            <person name="Cadieu E."/>
            <person name="Dreano S."/>
            <person name="Gloux S."/>
            <person name="Lelaure V."/>
            <person name="Mottier S."/>
            <person name="Galibert F."/>
            <person name="Aves S.J."/>
            <person name="Xiang Z."/>
            <person name="Hunt C."/>
            <person name="Moore K."/>
            <person name="Hurst S.M."/>
            <person name="Lucas M."/>
            <person name="Rochet M."/>
            <person name="Gaillardin C."/>
            <person name="Tallada V.A."/>
            <person name="Garzon A."/>
            <person name="Thode G."/>
            <person name="Daga R.R."/>
            <person name="Cruzado L."/>
            <person name="Jimenez J."/>
            <person name="Sanchez M."/>
            <person name="del Rey F."/>
            <person name="Benito J."/>
            <person name="Dominguez A."/>
            <person name="Revuelta J.L."/>
            <person name="Moreno S."/>
            <person name="Armstrong J."/>
            <person name="Forsburg S.L."/>
            <person name="Cerutti L."/>
            <person name="Lowe T."/>
            <person name="McCombie W.R."/>
            <person name="Paulsen I."/>
            <person name="Potashkin J."/>
            <person name="Shpakovski G.V."/>
            <person name="Ussery D."/>
            <person name="Barrell B.G."/>
            <person name="Nurse P."/>
        </authorList>
    </citation>
    <scope>NUCLEOTIDE SEQUENCE [LARGE SCALE GENOMIC DNA]</scope>
    <source>
        <strain>972 / ATCC 24843</strain>
    </source>
</reference>
<proteinExistence type="predicted"/>
<organism>
    <name type="scientific">Schizosaccharomyces pombe (strain 972 / ATCC 24843)</name>
    <name type="common">Fission yeast</name>
    <dbReference type="NCBI Taxonomy" id="284812"/>
    <lineage>
        <taxon>Eukaryota</taxon>
        <taxon>Fungi</taxon>
        <taxon>Dikarya</taxon>
        <taxon>Ascomycota</taxon>
        <taxon>Taphrinomycotina</taxon>
        <taxon>Schizosaccharomycetes</taxon>
        <taxon>Schizosaccharomycetales</taxon>
        <taxon>Schizosaccharomycetaceae</taxon>
        <taxon>Schizosaccharomyces</taxon>
    </lineage>
</organism>
<accession>P87136</accession>
<comment type="subcellular location">
    <subcellularLocation>
        <location evidence="3">Membrane</location>
        <topology evidence="3">Multi-pass membrane protein</topology>
    </subcellularLocation>
</comment>
<name>YDM5_SCHPO</name>
<protein>
    <recommendedName>
        <fullName>Uncharacterized protein C57A7.05</fullName>
    </recommendedName>
</protein>
<dbReference type="EMBL" id="CU329670">
    <property type="protein sequence ID" value="CAB08763.1"/>
    <property type="molecule type" value="Genomic_DNA"/>
</dbReference>
<dbReference type="PIR" id="T38949">
    <property type="entry name" value="T38949"/>
</dbReference>
<dbReference type="RefSeq" id="NP_593376.1">
    <property type="nucleotide sequence ID" value="NM_001018808.2"/>
</dbReference>
<dbReference type="BioGRID" id="279337">
    <property type="interactions" value="1"/>
</dbReference>
<dbReference type="STRING" id="284812.P87136"/>
<dbReference type="iPTMnet" id="P87136"/>
<dbReference type="PaxDb" id="4896-SPAC57A7.05.1"/>
<dbReference type="EnsemblFungi" id="SPAC57A7.05.1">
    <property type="protein sequence ID" value="SPAC57A7.05.1:pep"/>
    <property type="gene ID" value="SPAC57A7.05"/>
</dbReference>
<dbReference type="KEGG" id="spo:2542893"/>
<dbReference type="PomBase" id="SPAC57A7.05"/>
<dbReference type="VEuPathDB" id="FungiDB:SPAC57A7.05"/>
<dbReference type="eggNOG" id="KOG4711">
    <property type="taxonomic scope" value="Eukaryota"/>
</dbReference>
<dbReference type="HOGENOM" id="CLU_003918_2_0_1"/>
<dbReference type="InParanoid" id="P87136"/>
<dbReference type="OMA" id="NEQYLMF"/>
<dbReference type="PhylomeDB" id="P87136"/>
<dbReference type="PRO" id="PR:P87136"/>
<dbReference type="Proteomes" id="UP000002485">
    <property type="component" value="Chromosome I"/>
</dbReference>
<dbReference type="GO" id="GO:0005783">
    <property type="term" value="C:endoplasmic reticulum"/>
    <property type="evidence" value="ECO:0007005"/>
    <property type="project" value="PomBase"/>
</dbReference>
<dbReference type="GO" id="GO:0016020">
    <property type="term" value="C:membrane"/>
    <property type="evidence" value="ECO:0007669"/>
    <property type="project" value="UniProtKB-SubCell"/>
</dbReference>
<dbReference type="InterPro" id="IPR018823">
    <property type="entry name" value="ArAE_2_N"/>
</dbReference>
<dbReference type="InterPro" id="IPR018820">
    <property type="entry name" value="BRE4-related_DUF2421"/>
</dbReference>
<dbReference type="InterPro" id="IPR049453">
    <property type="entry name" value="Memb_transporter_dom"/>
</dbReference>
<dbReference type="PANTHER" id="PTHR37994">
    <property type="entry name" value="ARAE_2_N DOMAIN-CONTAINING PROTEIN-RELATED"/>
    <property type="match status" value="1"/>
</dbReference>
<dbReference type="PANTHER" id="PTHR37994:SF1">
    <property type="entry name" value="ER TRANSPORTER 6TM N-TERMINAL DOMAIN-CONTAINING PROTEIN"/>
    <property type="match status" value="1"/>
</dbReference>
<dbReference type="Pfam" id="PF10337">
    <property type="entry name" value="ArAE_2_N"/>
    <property type="match status" value="1"/>
</dbReference>
<dbReference type="Pfam" id="PF10334">
    <property type="entry name" value="BRE4"/>
    <property type="match status" value="1"/>
</dbReference>
<dbReference type="Pfam" id="PF13515">
    <property type="entry name" value="FUSC_2"/>
    <property type="match status" value="1"/>
</dbReference>